<dbReference type="EC" id="7.4.2.8" evidence="1"/>
<dbReference type="EMBL" id="AE017282">
    <property type="protein sequence ID" value="AAU92093.1"/>
    <property type="status" value="ALT_INIT"/>
    <property type="molecule type" value="Genomic_DNA"/>
</dbReference>
<dbReference type="RefSeq" id="WP_041361111.1">
    <property type="nucleotide sequence ID" value="NC_002977.6"/>
</dbReference>
<dbReference type="SMR" id="Q607S5"/>
<dbReference type="STRING" id="243233.MCA1680"/>
<dbReference type="GeneID" id="88223938"/>
<dbReference type="KEGG" id="mca:MCA1680"/>
<dbReference type="eggNOG" id="COG0653">
    <property type="taxonomic scope" value="Bacteria"/>
</dbReference>
<dbReference type="HOGENOM" id="CLU_005314_3_0_6"/>
<dbReference type="Proteomes" id="UP000006821">
    <property type="component" value="Chromosome"/>
</dbReference>
<dbReference type="GO" id="GO:0031522">
    <property type="term" value="C:cell envelope Sec protein transport complex"/>
    <property type="evidence" value="ECO:0007669"/>
    <property type="project" value="TreeGrafter"/>
</dbReference>
<dbReference type="GO" id="GO:0005829">
    <property type="term" value="C:cytosol"/>
    <property type="evidence" value="ECO:0007669"/>
    <property type="project" value="TreeGrafter"/>
</dbReference>
<dbReference type="GO" id="GO:0005886">
    <property type="term" value="C:plasma membrane"/>
    <property type="evidence" value="ECO:0007669"/>
    <property type="project" value="UniProtKB-SubCell"/>
</dbReference>
<dbReference type="GO" id="GO:0005524">
    <property type="term" value="F:ATP binding"/>
    <property type="evidence" value="ECO:0007669"/>
    <property type="project" value="UniProtKB-UniRule"/>
</dbReference>
<dbReference type="GO" id="GO:0046872">
    <property type="term" value="F:metal ion binding"/>
    <property type="evidence" value="ECO:0007669"/>
    <property type="project" value="UniProtKB-KW"/>
</dbReference>
<dbReference type="GO" id="GO:0008564">
    <property type="term" value="F:protein-exporting ATPase activity"/>
    <property type="evidence" value="ECO:0007669"/>
    <property type="project" value="UniProtKB-EC"/>
</dbReference>
<dbReference type="GO" id="GO:0065002">
    <property type="term" value="P:intracellular protein transmembrane transport"/>
    <property type="evidence" value="ECO:0007669"/>
    <property type="project" value="UniProtKB-UniRule"/>
</dbReference>
<dbReference type="GO" id="GO:0017038">
    <property type="term" value="P:protein import"/>
    <property type="evidence" value="ECO:0007669"/>
    <property type="project" value="InterPro"/>
</dbReference>
<dbReference type="GO" id="GO:0006605">
    <property type="term" value="P:protein targeting"/>
    <property type="evidence" value="ECO:0007669"/>
    <property type="project" value="UniProtKB-UniRule"/>
</dbReference>
<dbReference type="GO" id="GO:0043952">
    <property type="term" value="P:protein transport by the Sec complex"/>
    <property type="evidence" value="ECO:0007669"/>
    <property type="project" value="TreeGrafter"/>
</dbReference>
<dbReference type="CDD" id="cd17928">
    <property type="entry name" value="DEXDc_SecA"/>
    <property type="match status" value="1"/>
</dbReference>
<dbReference type="CDD" id="cd18803">
    <property type="entry name" value="SF2_C_secA"/>
    <property type="match status" value="1"/>
</dbReference>
<dbReference type="FunFam" id="3.40.50.300:FF:000113">
    <property type="entry name" value="Preprotein translocase subunit SecA"/>
    <property type="match status" value="1"/>
</dbReference>
<dbReference type="FunFam" id="3.90.1440.10:FF:000001">
    <property type="entry name" value="Preprotein translocase subunit SecA"/>
    <property type="match status" value="1"/>
</dbReference>
<dbReference type="FunFam" id="1.10.3060.10:FF:000003">
    <property type="entry name" value="Protein translocase subunit SecA"/>
    <property type="match status" value="1"/>
</dbReference>
<dbReference type="FunFam" id="3.40.50.300:FF:000334">
    <property type="entry name" value="Protein translocase subunit SecA"/>
    <property type="match status" value="1"/>
</dbReference>
<dbReference type="Gene3D" id="1.10.3060.10">
    <property type="entry name" value="Helical scaffold and wing domains of SecA"/>
    <property type="match status" value="1"/>
</dbReference>
<dbReference type="Gene3D" id="3.40.50.300">
    <property type="entry name" value="P-loop containing nucleotide triphosphate hydrolases"/>
    <property type="match status" value="2"/>
</dbReference>
<dbReference type="Gene3D" id="3.90.1440.10">
    <property type="entry name" value="SecA, preprotein cross-linking domain"/>
    <property type="match status" value="1"/>
</dbReference>
<dbReference type="HAMAP" id="MF_01382">
    <property type="entry name" value="SecA"/>
    <property type="match status" value="1"/>
</dbReference>
<dbReference type="InterPro" id="IPR014001">
    <property type="entry name" value="Helicase_ATP-bd"/>
</dbReference>
<dbReference type="InterPro" id="IPR001650">
    <property type="entry name" value="Helicase_C-like"/>
</dbReference>
<dbReference type="InterPro" id="IPR027417">
    <property type="entry name" value="P-loop_NTPase"/>
</dbReference>
<dbReference type="InterPro" id="IPR004027">
    <property type="entry name" value="SEC_C_motif"/>
</dbReference>
<dbReference type="InterPro" id="IPR000185">
    <property type="entry name" value="SecA"/>
</dbReference>
<dbReference type="InterPro" id="IPR020937">
    <property type="entry name" value="SecA_CS"/>
</dbReference>
<dbReference type="InterPro" id="IPR011115">
    <property type="entry name" value="SecA_DEAD"/>
</dbReference>
<dbReference type="InterPro" id="IPR014018">
    <property type="entry name" value="SecA_motor_DEAD"/>
</dbReference>
<dbReference type="InterPro" id="IPR011130">
    <property type="entry name" value="SecA_preprotein_X-link_dom"/>
</dbReference>
<dbReference type="InterPro" id="IPR044722">
    <property type="entry name" value="SecA_SF2_C"/>
</dbReference>
<dbReference type="InterPro" id="IPR011116">
    <property type="entry name" value="SecA_Wing/Scaffold"/>
</dbReference>
<dbReference type="InterPro" id="IPR036266">
    <property type="entry name" value="SecA_Wing/Scaffold_sf"/>
</dbReference>
<dbReference type="InterPro" id="IPR036670">
    <property type="entry name" value="SecA_X-link_sf"/>
</dbReference>
<dbReference type="NCBIfam" id="NF009538">
    <property type="entry name" value="PRK12904.1"/>
    <property type="match status" value="1"/>
</dbReference>
<dbReference type="NCBIfam" id="TIGR00963">
    <property type="entry name" value="secA"/>
    <property type="match status" value="1"/>
</dbReference>
<dbReference type="PANTHER" id="PTHR30612:SF0">
    <property type="entry name" value="CHLOROPLAST PROTEIN-TRANSPORTING ATPASE"/>
    <property type="match status" value="1"/>
</dbReference>
<dbReference type="PANTHER" id="PTHR30612">
    <property type="entry name" value="SECA INNER MEMBRANE COMPONENT OF SEC PROTEIN SECRETION SYSTEM"/>
    <property type="match status" value="1"/>
</dbReference>
<dbReference type="Pfam" id="PF21090">
    <property type="entry name" value="P-loop_SecA"/>
    <property type="match status" value="1"/>
</dbReference>
<dbReference type="Pfam" id="PF02810">
    <property type="entry name" value="SEC-C"/>
    <property type="match status" value="1"/>
</dbReference>
<dbReference type="Pfam" id="PF07517">
    <property type="entry name" value="SecA_DEAD"/>
    <property type="match status" value="1"/>
</dbReference>
<dbReference type="Pfam" id="PF01043">
    <property type="entry name" value="SecA_PP_bind"/>
    <property type="match status" value="1"/>
</dbReference>
<dbReference type="Pfam" id="PF07516">
    <property type="entry name" value="SecA_SW"/>
    <property type="match status" value="1"/>
</dbReference>
<dbReference type="PRINTS" id="PR00906">
    <property type="entry name" value="SECA"/>
</dbReference>
<dbReference type="SMART" id="SM00957">
    <property type="entry name" value="SecA_DEAD"/>
    <property type="match status" value="1"/>
</dbReference>
<dbReference type="SMART" id="SM00958">
    <property type="entry name" value="SecA_PP_bind"/>
    <property type="match status" value="1"/>
</dbReference>
<dbReference type="SUPFAM" id="SSF81886">
    <property type="entry name" value="Helical scaffold and wing domains of SecA"/>
    <property type="match status" value="1"/>
</dbReference>
<dbReference type="SUPFAM" id="SSF52540">
    <property type="entry name" value="P-loop containing nucleoside triphosphate hydrolases"/>
    <property type="match status" value="2"/>
</dbReference>
<dbReference type="SUPFAM" id="SSF81767">
    <property type="entry name" value="Pre-protein crosslinking domain of SecA"/>
    <property type="match status" value="1"/>
</dbReference>
<dbReference type="PROSITE" id="PS01312">
    <property type="entry name" value="SECA"/>
    <property type="match status" value="1"/>
</dbReference>
<dbReference type="PROSITE" id="PS51196">
    <property type="entry name" value="SECA_MOTOR_DEAD"/>
    <property type="match status" value="1"/>
</dbReference>
<organism>
    <name type="scientific">Methylococcus capsulatus (strain ATCC 33009 / NCIMB 11132 / Bath)</name>
    <dbReference type="NCBI Taxonomy" id="243233"/>
    <lineage>
        <taxon>Bacteria</taxon>
        <taxon>Pseudomonadati</taxon>
        <taxon>Pseudomonadota</taxon>
        <taxon>Gammaproteobacteria</taxon>
        <taxon>Methylococcales</taxon>
        <taxon>Methylococcaceae</taxon>
        <taxon>Methylococcus</taxon>
    </lineage>
</organism>
<protein>
    <recommendedName>
        <fullName evidence="1">Protein translocase subunit SecA</fullName>
        <ecNumber evidence="1">7.4.2.8</ecNumber>
    </recommendedName>
</protein>
<reference key="1">
    <citation type="journal article" date="2004" name="PLoS Biol.">
        <title>Genomic insights into methanotrophy: the complete genome sequence of Methylococcus capsulatus (Bath).</title>
        <authorList>
            <person name="Ward N.L."/>
            <person name="Larsen O."/>
            <person name="Sakwa J."/>
            <person name="Bruseth L."/>
            <person name="Khouri H.M."/>
            <person name="Durkin A.S."/>
            <person name="Dimitrov G."/>
            <person name="Jiang L."/>
            <person name="Scanlan D."/>
            <person name="Kang K.H."/>
            <person name="Lewis M.R."/>
            <person name="Nelson K.E."/>
            <person name="Methe B.A."/>
            <person name="Wu M."/>
            <person name="Heidelberg J.F."/>
            <person name="Paulsen I.T."/>
            <person name="Fouts D.E."/>
            <person name="Ravel J."/>
            <person name="Tettelin H."/>
            <person name="Ren Q."/>
            <person name="Read T.D."/>
            <person name="DeBoy R.T."/>
            <person name="Seshadri R."/>
            <person name="Salzberg S.L."/>
            <person name="Jensen H.B."/>
            <person name="Birkeland N.K."/>
            <person name="Nelson W.C."/>
            <person name="Dodson R.J."/>
            <person name="Grindhaug S.H."/>
            <person name="Holt I.E."/>
            <person name="Eidhammer I."/>
            <person name="Jonasen I."/>
            <person name="Vanaken S."/>
            <person name="Utterback T.R."/>
            <person name="Feldblyum T.V."/>
            <person name="Fraser C.M."/>
            <person name="Lillehaug J.R."/>
            <person name="Eisen J.A."/>
        </authorList>
    </citation>
    <scope>NUCLEOTIDE SEQUENCE [LARGE SCALE GENOMIC DNA]</scope>
    <source>
        <strain>ATCC 33009 / NCIMB 11132 / Bath</strain>
    </source>
</reference>
<proteinExistence type="inferred from homology"/>
<gene>
    <name evidence="1" type="primary">secA</name>
    <name type="ordered locus">MCA1680</name>
</gene>
<keyword id="KW-0067">ATP-binding</keyword>
<keyword id="KW-0997">Cell inner membrane</keyword>
<keyword id="KW-1003">Cell membrane</keyword>
<keyword id="KW-0963">Cytoplasm</keyword>
<keyword id="KW-0472">Membrane</keyword>
<keyword id="KW-0479">Metal-binding</keyword>
<keyword id="KW-0547">Nucleotide-binding</keyword>
<keyword id="KW-0653">Protein transport</keyword>
<keyword id="KW-1185">Reference proteome</keyword>
<keyword id="KW-1278">Translocase</keyword>
<keyword id="KW-0811">Translocation</keyword>
<keyword id="KW-0813">Transport</keyword>
<keyword id="KW-0862">Zinc</keyword>
<name>SECA_METCA</name>
<evidence type="ECO:0000255" key="1">
    <source>
        <dbReference type="HAMAP-Rule" id="MF_01382"/>
    </source>
</evidence>
<evidence type="ECO:0000256" key="2">
    <source>
        <dbReference type="SAM" id="MobiDB-lite"/>
    </source>
</evidence>
<evidence type="ECO:0000305" key="3"/>
<accession>Q607S5</accession>
<feature type="chain" id="PRO_0000320851" description="Protein translocase subunit SecA">
    <location>
        <begin position="1"/>
        <end position="906"/>
    </location>
</feature>
<feature type="region of interest" description="Disordered" evidence="2">
    <location>
        <begin position="553"/>
        <end position="576"/>
    </location>
</feature>
<feature type="region of interest" description="Disordered" evidence="2">
    <location>
        <begin position="854"/>
        <end position="906"/>
    </location>
</feature>
<feature type="compositionally biased region" description="Basic and acidic residues" evidence="2">
    <location>
        <begin position="553"/>
        <end position="563"/>
    </location>
</feature>
<feature type="compositionally biased region" description="Basic residues" evidence="2">
    <location>
        <begin position="896"/>
        <end position="906"/>
    </location>
</feature>
<feature type="binding site" evidence="1">
    <location>
        <position position="87"/>
    </location>
    <ligand>
        <name>ATP</name>
        <dbReference type="ChEBI" id="CHEBI:30616"/>
    </ligand>
</feature>
<feature type="binding site" evidence="1">
    <location>
        <begin position="105"/>
        <end position="109"/>
    </location>
    <ligand>
        <name>ATP</name>
        <dbReference type="ChEBI" id="CHEBI:30616"/>
    </ligand>
</feature>
<feature type="binding site" evidence="1">
    <location>
        <position position="507"/>
    </location>
    <ligand>
        <name>ATP</name>
        <dbReference type="ChEBI" id="CHEBI:30616"/>
    </ligand>
</feature>
<feature type="binding site" evidence="1">
    <location>
        <position position="890"/>
    </location>
    <ligand>
        <name>Zn(2+)</name>
        <dbReference type="ChEBI" id="CHEBI:29105"/>
    </ligand>
</feature>
<feature type="binding site" evidence="1">
    <location>
        <position position="892"/>
    </location>
    <ligand>
        <name>Zn(2+)</name>
        <dbReference type="ChEBI" id="CHEBI:29105"/>
    </ligand>
</feature>
<feature type="binding site" evidence="1">
    <location>
        <position position="901"/>
    </location>
    <ligand>
        <name>Zn(2+)</name>
        <dbReference type="ChEBI" id="CHEBI:29105"/>
    </ligand>
</feature>
<feature type="binding site" evidence="1">
    <location>
        <position position="902"/>
    </location>
    <ligand>
        <name>Zn(2+)</name>
        <dbReference type="ChEBI" id="CHEBI:29105"/>
    </ligand>
</feature>
<comment type="function">
    <text evidence="1">Part of the Sec protein translocase complex. Interacts with the SecYEG preprotein conducting channel. Has a central role in coupling the hydrolysis of ATP to the transfer of proteins into and across the cell membrane, serving both as a receptor for the preprotein-SecB complex and as an ATP-driven molecular motor driving the stepwise translocation of polypeptide chains across the membrane.</text>
</comment>
<comment type="catalytic activity">
    <reaction evidence="1">
        <text>ATP + H2O + cellular proteinSide 1 = ADP + phosphate + cellular proteinSide 2.</text>
        <dbReference type="EC" id="7.4.2.8"/>
    </reaction>
</comment>
<comment type="cofactor">
    <cofactor evidence="1">
        <name>Zn(2+)</name>
        <dbReference type="ChEBI" id="CHEBI:29105"/>
    </cofactor>
    <text evidence="1">May bind 1 zinc ion per subunit.</text>
</comment>
<comment type="subunit">
    <text evidence="1">Monomer and homodimer. Part of the essential Sec protein translocation apparatus which comprises SecA, SecYEG and auxiliary proteins SecDF-YajC and YidC.</text>
</comment>
<comment type="subcellular location">
    <subcellularLocation>
        <location evidence="1">Cell inner membrane</location>
        <topology evidence="1">Peripheral membrane protein</topology>
        <orientation evidence="1">Cytoplasmic side</orientation>
    </subcellularLocation>
    <subcellularLocation>
        <location evidence="1">Cytoplasm</location>
    </subcellularLocation>
    <text evidence="1">Distribution is 50-50.</text>
</comment>
<comment type="similarity">
    <text evidence="1">Belongs to the SecA family.</text>
</comment>
<comment type="sequence caution" evidence="3">
    <conflict type="erroneous initiation">
        <sequence resource="EMBL-CDS" id="AAU92093"/>
    </conflict>
    <text>Truncated N-terminus.</text>
</comment>
<sequence>MLGKLVKKVVGSRNDRIIKRKRRLVKKINQLEPTIAALSDEALGRKTLEFRERLSNGETIDDLLVEAFAVVREASRRVLNMRHFDVQLIGAMVLNDGKIAEMKTGEGKTLVATLAAYLNALPGKGCHVVTVNDYLARRDAEWMGKLYGFLGLSTGVIVSNLDQEQRRRAYACDITYGTNNEFGFDYLRDNMAFTLDQRVQRDPFFAIVDEVDSILIDEARTPLIISGPTEDRSDLYHKVNALIPHLTRQEKEGGPGDYWVDEKARQVYLTESGHETIERLMVEQGLIGSDESLYDAVNIRLMHYINAALKAHALFQRDVDYIVRDGQVIIVDEFTGRAMPGRRWSEGLHQAVEAKENVPVHNENQTLASITFQNYFRLYEKLAGMTGTADTEAAEFHQIYGLEVVMIPPNRPMIRNDMGDLVYLTAREKFAAIVEDIKYCVEHGKPVLVGTTSIENSELLSGILRQAGVPHQVLNAKHHEQEAHIIAQAGRPGAVTIATNMAGRGTDIVLGGSLEEDLAHADPAMAEQVKAEWQQRHDAAVAAGGLHVIGSERHESRRIDNQLRGRSGRQGDPGSSRFYLSLEDPLMRIFASDRVAVLMQRLGMKEGESIEHPWVTRAIENAQRKVEARNFDIRKQLLEYDNVANDQRKVIYHMRTELMRADDISRTIEDIRHDVLGRMFAEHVPPHSLEEQWDVQGLQEVIEREIGLSLPIQRWLDDEPDLHEETLLERIIQEADAAYAAKVEAIGTQVMRHFEKSVMLQVLDNAWKEHLASMDHLRQGIHLRGYAQKDPKQEYKREAFEMFTGMLDSIKQEVVGIVSRVQVHSEEEVQEMEEQGRQPQEMQFQHAEVSALTLEEPPAAPPEESEGYAIPEGPRPFVRSGEKIGRNDPCPCGSGKKYKQCHGRLA</sequence>